<dbReference type="EC" id="3.5.1.41" evidence="1"/>
<dbReference type="EMBL" id="ABSU01000002">
    <property type="protein sequence ID" value="EFE35834.1"/>
    <property type="molecule type" value="Genomic_DNA"/>
</dbReference>
<dbReference type="RefSeq" id="XP_003016479.1">
    <property type="nucleotide sequence ID" value="XM_003016433.1"/>
</dbReference>
<dbReference type="SMR" id="D4AM78"/>
<dbReference type="STRING" id="663331.D4AM78"/>
<dbReference type="GlyCosmos" id="D4AM78">
    <property type="glycosylation" value="2 sites, No reported glycans"/>
</dbReference>
<dbReference type="GeneID" id="9521961"/>
<dbReference type="KEGG" id="abe:ARB_04768"/>
<dbReference type="eggNOG" id="ENOG502QRIP">
    <property type="taxonomic scope" value="Eukaryota"/>
</dbReference>
<dbReference type="HOGENOM" id="CLU_050708_0_0_1"/>
<dbReference type="OMA" id="HDSHQHT"/>
<dbReference type="OrthoDB" id="2125469at2759"/>
<dbReference type="Proteomes" id="UP000008866">
    <property type="component" value="Unassembled WGS sequence"/>
</dbReference>
<dbReference type="GO" id="GO:0008061">
    <property type="term" value="F:chitin binding"/>
    <property type="evidence" value="ECO:0007669"/>
    <property type="project" value="UniProtKB-KW"/>
</dbReference>
<dbReference type="GO" id="GO:0004099">
    <property type="term" value="F:chitin deacetylase activity"/>
    <property type="evidence" value="ECO:0007669"/>
    <property type="project" value="UniProtKB-EC"/>
</dbReference>
<dbReference type="GO" id="GO:0046872">
    <property type="term" value="F:metal ion binding"/>
    <property type="evidence" value="ECO:0007669"/>
    <property type="project" value="UniProtKB-KW"/>
</dbReference>
<dbReference type="GO" id="GO:0006032">
    <property type="term" value="P:chitin catabolic process"/>
    <property type="evidence" value="ECO:0007669"/>
    <property type="project" value="UniProtKB-KW"/>
</dbReference>
<dbReference type="GO" id="GO:0000272">
    <property type="term" value="P:polysaccharide catabolic process"/>
    <property type="evidence" value="ECO:0007669"/>
    <property type="project" value="UniProtKB-KW"/>
</dbReference>
<dbReference type="CDD" id="cd10951">
    <property type="entry name" value="CE4_ClCDA_like"/>
    <property type="match status" value="1"/>
</dbReference>
<dbReference type="Gene3D" id="3.20.20.370">
    <property type="entry name" value="Glycoside hydrolase/deacetylase"/>
    <property type="match status" value="1"/>
</dbReference>
<dbReference type="InterPro" id="IPR011330">
    <property type="entry name" value="Glyco_hydro/deAcase_b/a-brl"/>
</dbReference>
<dbReference type="InterPro" id="IPR002509">
    <property type="entry name" value="NODB_dom"/>
</dbReference>
<dbReference type="PANTHER" id="PTHR46471">
    <property type="entry name" value="CHITIN DEACETYLASE"/>
    <property type="match status" value="1"/>
</dbReference>
<dbReference type="PANTHER" id="PTHR46471:SF2">
    <property type="entry name" value="CHITIN DEACETYLASE-RELATED"/>
    <property type="match status" value="1"/>
</dbReference>
<dbReference type="Pfam" id="PF01522">
    <property type="entry name" value="Polysacc_deac_1"/>
    <property type="match status" value="1"/>
</dbReference>
<dbReference type="SUPFAM" id="SSF88713">
    <property type="entry name" value="Glycoside hydrolase/deacetylase"/>
    <property type="match status" value="1"/>
</dbReference>
<dbReference type="PROSITE" id="PS51677">
    <property type="entry name" value="NODB"/>
    <property type="match status" value="1"/>
</dbReference>
<gene>
    <name evidence="7" type="primary">CDA</name>
    <name type="ORF">ARB_04768</name>
</gene>
<name>CDA_ARTBC</name>
<comment type="function">
    <text evidence="2">Hydrolyzes the N-acetamido groups of N-acetyl-D-glucosamine residues in chitin to form chitosan and acetate.</text>
</comment>
<comment type="catalytic activity">
    <reaction evidence="2">
        <text>[(1-&gt;4)-N-acetyl-beta-D-glucosaminyl](n) + n H2O = chitosan + n acetate</text>
        <dbReference type="Rhea" id="RHEA:10464"/>
        <dbReference type="Rhea" id="RHEA-COMP:9593"/>
        <dbReference type="Rhea" id="RHEA-COMP:9597"/>
        <dbReference type="ChEBI" id="CHEBI:15377"/>
        <dbReference type="ChEBI" id="CHEBI:17029"/>
        <dbReference type="ChEBI" id="CHEBI:30089"/>
        <dbReference type="ChEBI" id="CHEBI:57704"/>
        <dbReference type="EC" id="3.5.1.41"/>
    </reaction>
    <physiologicalReaction direction="left-to-right" evidence="2">
        <dbReference type="Rhea" id="RHEA:10465"/>
    </physiologicalReaction>
</comment>
<comment type="cofactor">
    <cofactor evidence="2">
        <name>Co(2+)</name>
        <dbReference type="ChEBI" id="CHEBI:48828"/>
    </cofactor>
</comment>
<comment type="similarity">
    <text evidence="7">Belongs to the polysaccharide deacetylase family.</text>
</comment>
<sequence length="371" mass="40836">MLCRLFTLFITAALACCVAAIPLQGQQSNSIIERTPGRWPWHPHRPRPHHPRPHWPFPKPHWPKPHWPKPHWPKPEPEPTAVPTMAPEPTTVPPTEPSGTYPPETTPTVEPTVVPTDVPTTFPSMTPTADPTVAPTGTSVPTGVPTGVPPMPGTIPFGTVINQCTVNGTIALTFDDGPYDYTGPLLDIFAKNGAKGTFFVNAMNFGNIMDYADVIKRMYKEGHMLGSHTYSHADLSKLNSTGIALEMKKLDDILAPIIDGNRPTYMRAPYFAYSDTVSKTMAELKYHMIDANIDTKDYEHATPDGVPISVENFKKGLEAGGTITLCHDVHQTTVELLIQQLLDEIKKRGLRAVTVGECLGDPQANWYRPAQ</sequence>
<evidence type="ECO:0000250" key="1">
    <source>
        <dbReference type="UniProtKB" id="Q06702"/>
    </source>
</evidence>
<evidence type="ECO:0000250" key="2">
    <source>
        <dbReference type="UniProtKB" id="Q6DWK3"/>
    </source>
</evidence>
<evidence type="ECO:0000255" key="3"/>
<evidence type="ECO:0000255" key="4">
    <source>
        <dbReference type="PROSITE-ProRule" id="PRU00498"/>
    </source>
</evidence>
<evidence type="ECO:0000255" key="5">
    <source>
        <dbReference type="PROSITE-ProRule" id="PRU01014"/>
    </source>
</evidence>
<evidence type="ECO:0000256" key="6">
    <source>
        <dbReference type="SAM" id="MobiDB-lite"/>
    </source>
</evidence>
<evidence type="ECO:0000305" key="7"/>
<evidence type="ECO:0000312" key="8">
    <source>
        <dbReference type="Proteomes" id="UP000008866"/>
    </source>
</evidence>
<reference key="1">
    <citation type="journal article" date="2011" name="Genome Biol.">
        <title>Comparative and functional genomics provide insights into the pathogenicity of dermatophytic fungi.</title>
        <authorList>
            <person name="Burmester A."/>
            <person name="Shelest E."/>
            <person name="Gloeckner G."/>
            <person name="Heddergott C."/>
            <person name="Schindler S."/>
            <person name="Staib P."/>
            <person name="Heidel A."/>
            <person name="Felder M."/>
            <person name="Petzold A."/>
            <person name="Szafranski K."/>
            <person name="Feuermann M."/>
            <person name="Pedruzzi I."/>
            <person name="Priebe S."/>
            <person name="Groth M."/>
            <person name="Winkler R."/>
            <person name="Li W."/>
            <person name="Kniemeyer O."/>
            <person name="Schroeckh V."/>
            <person name="Hertweck C."/>
            <person name="Hube B."/>
            <person name="White T.C."/>
            <person name="Platzer M."/>
            <person name="Guthke R."/>
            <person name="Heitman J."/>
            <person name="Woestemeyer J."/>
            <person name="Zipfel P.F."/>
            <person name="Monod M."/>
            <person name="Brakhage A.A."/>
        </authorList>
    </citation>
    <scope>NUCLEOTIDE SEQUENCE [LARGE SCALE GENOMIC DNA]</scope>
    <source>
        <strain evidence="8">ATCC MYA-4681 / CBS 112371</strain>
    </source>
</reference>
<organism>
    <name type="scientific">Arthroderma benhamiae (strain ATCC MYA-4681 / CBS 112371)</name>
    <name type="common">Trichophyton mentagrophytes</name>
    <dbReference type="NCBI Taxonomy" id="663331"/>
    <lineage>
        <taxon>Eukaryota</taxon>
        <taxon>Fungi</taxon>
        <taxon>Dikarya</taxon>
        <taxon>Ascomycota</taxon>
        <taxon>Pezizomycotina</taxon>
        <taxon>Eurotiomycetes</taxon>
        <taxon>Eurotiomycetidae</taxon>
        <taxon>Onygenales</taxon>
        <taxon>Arthrodermataceae</taxon>
        <taxon>Trichophyton</taxon>
    </lineage>
</organism>
<proteinExistence type="inferred from homology"/>
<protein>
    <recommendedName>
        <fullName evidence="1">Chitin deacetylase</fullName>
        <ecNumber evidence="1">3.5.1.41</ecNumber>
    </recommendedName>
</protein>
<accession>D4AM78</accession>
<feature type="signal peptide" evidence="3">
    <location>
        <begin position="1"/>
        <end position="20"/>
    </location>
</feature>
<feature type="chain" id="PRO_0000434493" description="Chitin deacetylase" evidence="3">
    <location>
        <begin position="21"/>
        <end position="371"/>
    </location>
</feature>
<feature type="domain" description="NodB homology" evidence="5">
    <location>
        <begin position="168"/>
        <end position="353"/>
    </location>
</feature>
<feature type="region of interest" description="Disordered" evidence="6">
    <location>
        <begin position="73"/>
        <end position="112"/>
    </location>
</feature>
<feature type="compositionally biased region" description="Low complexity" evidence="6">
    <location>
        <begin position="79"/>
        <end position="89"/>
    </location>
</feature>
<feature type="compositionally biased region" description="Low complexity" evidence="6">
    <location>
        <begin position="102"/>
        <end position="112"/>
    </location>
</feature>
<feature type="active site" description="Proton acceptor" evidence="5">
    <location>
        <position position="175"/>
    </location>
</feature>
<feature type="active site" description="Proton donor" evidence="5">
    <location>
        <position position="327"/>
    </location>
</feature>
<feature type="binding site" evidence="2">
    <location>
        <position position="175"/>
    </location>
    <ligand>
        <name>acetate</name>
        <dbReference type="ChEBI" id="CHEBI:30089"/>
    </ligand>
</feature>
<feature type="binding site" evidence="2">
    <location>
        <position position="176"/>
    </location>
    <ligand>
        <name>Co(2+)</name>
        <dbReference type="ChEBI" id="CHEBI:48828"/>
    </ligand>
</feature>
<feature type="binding site" evidence="2">
    <location>
        <position position="228"/>
    </location>
    <ligand>
        <name>Co(2+)</name>
        <dbReference type="ChEBI" id="CHEBI:48828"/>
    </ligand>
</feature>
<feature type="binding site" evidence="2">
    <location>
        <position position="232"/>
    </location>
    <ligand>
        <name>Co(2+)</name>
        <dbReference type="ChEBI" id="CHEBI:48828"/>
    </ligand>
</feature>
<feature type="binding site" evidence="2">
    <location>
        <position position="270"/>
    </location>
    <ligand>
        <name>acetate</name>
        <dbReference type="ChEBI" id="CHEBI:30089"/>
    </ligand>
</feature>
<feature type="site" description="May prevent de-N-acetylated sugar residues from interacting with the active site" evidence="2">
    <location>
        <position position="296"/>
    </location>
</feature>
<feature type="glycosylation site" description="N-linked (GlcNAc...) asparagine" evidence="4">
    <location>
        <position position="167"/>
    </location>
</feature>
<feature type="glycosylation site" description="N-linked (GlcNAc...) asparagine" evidence="4">
    <location>
        <position position="239"/>
    </location>
</feature>
<feature type="disulfide bond" evidence="2">
    <location>
        <begin position="164"/>
        <end position="358"/>
    </location>
</feature>
<keyword id="KW-0119">Carbohydrate metabolism</keyword>
<keyword id="KW-0146">Chitin degradation</keyword>
<keyword id="KW-0147">Chitin-binding</keyword>
<keyword id="KW-0170">Cobalt</keyword>
<keyword id="KW-1015">Disulfide bond</keyword>
<keyword id="KW-0325">Glycoprotein</keyword>
<keyword id="KW-0378">Hydrolase</keyword>
<keyword id="KW-0479">Metal-binding</keyword>
<keyword id="KW-0624">Polysaccharide degradation</keyword>
<keyword id="KW-1185">Reference proteome</keyword>
<keyword id="KW-0732">Signal</keyword>